<keyword id="KW-0025">Alternative splicing</keyword>
<keyword id="KW-0130">Cell adhesion</keyword>
<keyword id="KW-1003">Cell membrane</keyword>
<keyword id="KW-1015">Disulfide bond</keyword>
<keyword id="KW-0325">Glycoprotein</keyword>
<keyword id="KW-0401">Integrin</keyword>
<keyword id="KW-0472">Membrane</keyword>
<keyword id="KW-0552">Olfaction</keyword>
<keyword id="KW-0675">Receptor</keyword>
<keyword id="KW-1185">Reference proteome</keyword>
<keyword id="KW-0677">Repeat</keyword>
<keyword id="KW-0716">Sensory transduction</keyword>
<keyword id="KW-0732">Signal</keyword>
<keyword id="KW-0812">Transmembrane</keyword>
<keyword id="KW-1133">Transmembrane helix</keyword>
<gene>
    <name type="primary">if</name>
    <name type="ORF">CG9623</name>
</gene>
<feature type="signal peptide" evidence="1">
    <location>
        <begin position="1"/>
        <end position="31"/>
    </location>
</feature>
<feature type="chain" id="PRO_0000016323" description="Integrin alpha-PS2">
    <location>
        <begin position="32"/>
        <end position="1396"/>
    </location>
</feature>
<feature type="chain" id="PRO_0000016324" description="Integrin alpha-PS2 heavy chain">
    <location>
        <begin position="32"/>
        <end position="1243" status="uncertain"/>
    </location>
</feature>
<feature type="chain" id="PRO_0000016325" description="Integrin alpha-PS2 light chain">
    <location>
        <begin position="1244" status="uncertain"/>
        <end position="1396"/>
    </location>
</feature>
<feature type="topological domain" description="Extracellular" evidence="1">
    <location>
        <begin position="32"/>
        <end position="1341"/>
    </location>
</feature>
<feature type="transmembrane region" description="Helical" evidence="1">
    <location>
        <begin position="1342"/>
        <end position="1366"/>
    </location>
</feature>
<feature type="topological domain" description="Cytoplasmic" evidence="1">
    <location>
        <begin position="1367"/>
        <end position="1396"/>
    </location>
</feature>
<feature type="repeat" description="FG-GAP 1" evidence="2">
    <location>
        <begin position="36"/>
        <end position="106"/>
    </location>
</feature>
<feature type="repeat" description="FG-GAP 2" evidence="2">
    <location>
        <begin position="117"/>
        <end position="174"/>
    </location>
</feature>
<feature type="repeat" description="FG-GAP 3" evidence="2">
    <location>
        <begin position="186"/>
        <end position="239"/>
    </location>
</feature>
<feature type="repeat" description="FG-GAP 4" evidence="2">
    <location>
        <begin position="266"/>
        <end position="317"/>
    </location>
</feature>
<feature type="repeat" description="FG-GAP 5" evidence="2">
    <location>
        <begin position="318"/>
        <end position="383"/>
    </location>
</feature>
<feature type="repeat" description="FG-GAP 6" evidence="2">
    <location>
        <begin position="386"/>
        <end position="445"/>
    </location>
</feature>
<feature type="repeat" description="FG-GAP 7" evidence="2">
    <location>
        <begin position="452"/>
        <end position="514"/>
    </location>
</feature>
<feature type="region of interest" description="Disordered" evidence="3">
    <location>
        <begin position="960"/>
        <end position="1107"/>
    </location>
</feature>
<feature type="region of interest" description="Disordered" evidence="3">
    <location>
        <begin position="1159"/>
        <end position="1246"/>
    </location>
</feature>
<feature type="region of interest" description="Disordered" evidence="3">
    <location>
        <begin position="1377"/>
        <end position="1396"/>
    </location>
</feature>
<feature type="compositionally biased region" description="Basic and acidic residues" evidence="3">
    <location>
        <begin position="963"/>
        <end position="979"/>
    </location>
</feature>
<feature type="compositionally biased region" description="Polar residues" evidence="3">
    <location>
        <begin position="997"/>
        <end position="1006"/>
    </location>
</feature>
<feature type="compositionally biased region" description="Low complexity" evidence="3">
    <location>
        <begin position="1007"/>
        <end position="1021"/>
    </location>
</feature>
<feature type="compositionally biased region" description="Low complexity" evidence="3">
    <location>
        <begin position="1060"/>
        <end position="1071"/>
    </location>
</feature>
<feature type="compositionally biased region" description="Polar residues" evidence="3">
    <location>
        <begin position="1082"/>
        <end position="1099"/>
    </location>
</feature>
<feature type="compositionally biased region" description="Low complexity" evidence="3">
    <location>
        <begin position="1162"/>
        <end position="1182"/>
    </location>
</feature>
<feature type="compositionally biased region" description="Low complexity" evidence="3">
    <location>
        <begin position="1217"/>
        <end position="1226"/>
    </location>
</feature>
<feature type="glycosylation site" description="N-linked (GlcNAc...) asparagine" evidence="1">
    <location>
        <position position="69"/>
    </location>
</feature>
<feature type="glycosylation site" description="N-linked (GlcNAc...) asparagine" evidence="1">
    <location>
        <position position="209"/>
    </location>
</feature>
<feature type="glycosylation site" description="N-linked (GlcNAc...) asparagine" evidence="1">
    <location>
        <position position="322"/>
    </location>
</feature>
<feature type="glycosylation site" description="N-linked (GlcNAc...) asparagine" evidence="1">
    <location>
        <position position="584"/>
    </location>
</feature>
<feature type="glycosylation site" description="N-linked (GlcNAc...) asparagine" evidence="1">
    <location>
        <position position="598"/>
    </location>
</feature>
<feature type="glycosylation site" description="N-linked (GlcNAc...) asparagine" evidence="1">
    <location>
        <position position="741"/>
    </location>
</feature>
<feature type="glycosylation site" description="N-linked (GlcNAc...) asparagine" evidence="1">
    <location>
        <position position="783"/>
    </location>
</feature>
<feature type="glycosylation site" description="N-linked (GlcNAc...) asparagine" evidence="1">
    <location>
        <position position="833"/>
    </location>
</feature>
<feature type="glycosylation site" description="N-linked (GlcNAc...) asparagine" evidence="1">
    <location>
        <position position="959"/>
    </location>
</feature>
<feature type="glycosylation site" description="N-linked (GlcNAc...) asparagine" evidence="1">
    <location>
        <position position="1005"/>
    </location>
</feature>
<feature type="glycosylation site" description="N-linked (GlcNAc...) asparagine" evidence="1">
    <location>
        <position position="1299"/>
    </location>
</feature>
<feature type="glycosylation site" description="N-linked (GlcNAc...) asparagine" evidence="1">
    <location>
        <position position="1307"/>
    </location>
</feature>
<feature type="splice variant" id="VSP_002739" description="In isoform PS2M8." evidence="13">
    <location>
        <begin position="225"/>
        <end position="249"/>
    </location>
</feature>
<feature type="sequence conflict" description="In Ref. 1; AAC12788." evidence="14" ref="1">
    <original>A</original>
    <variation>G</variation>
    <location>
        <position position="29"/>
    </location>
</feature>
<feature type="sequence conflict" description="In Ref. 1; AAC12788." evidence="14" ref="1">
    <original>SPKQVEQRR</original>
    <variation>RSQASGATA</variation>
    <location>
        <begin position="968"/>
        <end position="976"/>
    </location>
</feature>
<feature type="sequence conflict" description="In Ref. 1." evidence="14" ref="1">
    <location>
        <begin position="1063"/>
        <end position="1064"/>
    </location>
</feature>
<feature type="sequence conflict" description="In Ref. 1; AAC12788." evidence="14" ref="1">
    <original>N</original>
    <variation>D</variation>
    <location>
        <position position="1235"/>
    </location>
</feature>
<feature type="sequence conflict" description="In Ref. 1; AAC12788." evidence="14" ref="1">
    <original>E</original>
    <variation>K</variation>
    <location>
        <position position="1242"/>
    </location>
</feature>
<feature type="sequence conflict" description="In Ref. 1; AAC12788." evidence="14" ref="1">
    <original>L</original>
    <variation>Q</variation>
    <location>
        <position position="1245"/>
    </location>
</feature>
<proteinExistence type="evidence at protein level"/>
<comment type="function">
    <text evidence="4 9 10 12">Alpha-PS2/beta-PS is a receptor for Tig, wb and Ten-m. Involved in the function and/or development of the olfactory system.</text>
</comment>
<comment type="subunit">
    <text>Heterodimer of an alpha and a beta subunit. The alpha subunit is composed of a heavy and a light chain linked by a disulfide bond. Alpha-PS2 associates with beta-PS.</text>
</comment>
<comment type="subcellular location">
    <subcellularLocation>
        <location evidence="6">Apical cell membrane</location>
        <topology evidence="6">Single-pass type I membrane protein</topology>
    </subcellularLocation>
    <subcellularLocation>
        <location evidence="6">Lateral cell membrane</location>
        <topology evidence="6">Single-pass type I membrane protein</topology>
    </subcellularLocation>
    <subcellularLocation>
        <location evidence="6">Basal cell membrane</location>
        <topology evidence="6">Single-pass type I membrane protein</topology>
    </subcellularLocation>
    <text>During mid-oogenesis, localizes to the apical, to the lateral and to the basal membranes of follicle cells. Apical membrane localization peaks at oogenesis stages 9 and 10A in columnar follicle cells overlying the oocyte while decreases in the most posterior follicle cells. During embryogenesis, at the end of germband extension concentrates at the basal membrane of mesodermal cells, where they adhere to the ectoderm. Then, in visceral mesoderm localizes basally, whereas in somatic mesoderm is homogenously distributed.</text>
</comment>
<comment type="alternative products">
    <event type="alternative splicing"/>
    <isoform>
        <id>P12080-1</id>
        <name>PS2C</name>
        <name>D</name>
        <name>F</name>
        <sequence type="displayed"/>
    </isoform>
    <isoform>
        <id>P12080-2</id>
        <name>PS2M8</name>
        <name>C</name>
        <sequence type="described" ref="VSP_002739"/>
    </isoform>
</comment>
<comment type="tissue specificity">
    <text evidence="5 6 8 11">In ovaries, highly expressed in follicle cells. At syncytial blastoderm stage, expressed in the embryonic mesodermal precursors but not in the ectoderm. At embryonic stages 7 and 10, expression is restricted to the mesoderm. At stage 12, expressed in the gonadal sheath and the interstitial cells of the gonad. In stage 16 embryos, expressed in the somatic and visceral muscles where localizes to sites of attachment between adjacent muscles. In third larval instar wing imaginal disk, expressed in the ventral compartment and in a subset of adepithelial and peripodial cells (at protein level).</text>
</comment>
<comment type="developmental stage">
    <text evidence="7 8 11">Expressed throughout embryonic and larval development with peaks of expression during mid-embryogenesis and at third larval instar (at protein level). The relative ratio of isoform 1/PS2C and isoform 2/PS2M8 varies widely during development.</text>
</comment>
<comment type="PTM">
    <text>The heavy-light chain cleavage site is either in 1230-1231, or 1233-1234, or 1243-1244.</text>
</comment>
<comment type="similarity">
    <text evidence="14">Belongs to the integrin alpha chain family.</text>
</comment>
<comment type="sequence caution" evidence="14">
    <conflict type="erroneous initiation">
        <sequence resource="EMBL-CDS" id="AAM50700"/>
    </conflict>
    <text>Extended N-terminus.</text>
</comment>
<comment type="sequence caution" evidence="14">
    <conflict type="miscellaneous discrepancy">
        <sequence resource="EMBL-CDS" id="AAM50700"/>
    </conflict>
    <text>Contaminating sequence. Potential poly-A sequence.</text>
</comment>
<reference key="1">
    <citation type="journal article" date="1987" name="Cell">
        <title>The Drosophila PS2 antigen is an invertebrate integrin that, like the fibronectin receptor, becomes localized to muscle attachments.</title>
        <authorList>
            <person name="Bogaert T."/>
            <person name="Brown N.H."/>
            <person name="Wilcox M."/>
        </authorList>
    </citation>
    <scope>NUCLEOTIDE SEQUENCE [MRNA] (ISOFORM PS2C)</scope>
    <scope>IDENTIFICATION BY MASS SPECTROMETRY</scope>
    <scope>TISSUE SPECIFICITY</scope>
    <scope>DEVELOPMENTAL STAGE</scope>
</reference>
<reference key="2">
    <citation type="journal article" date="2000" name="Science">
        <title>The genome sequence of Drosophila melanogaster.</title>
        <authorList>
            <person name="Adams M.D."/>
            <person name="Celniker S.E."/>
            <person name="Holt R.A."/>
            <person name="Evans C.A."/>
            <person name="Gocayne J.D."/>
            <person name="Amanatides P.G."/>
            <person name="Scherer S.E."/>
            <person name="Li P.W."/>
            <person name="Hoskins R.A."/>
            <person name="Galle R.F."/>
            <person name="George R.A."/>
            <person name="Lewis S.E."/>
            <person name="Richards S."/>
            <person name="Ashburner M."/>
            <person name="Henderson S.N."/>
            <person name="Sutton G.G."/>
            <person name="Wortman J.R."/>
            <person name="Yandell M.D."/>
            <person name="Zhang Q."/>
            <person name="Chen L.X."/>
            <person name="Brandon R.C."/>
            <person name="Rogers Y.-H.C."/>
            <person name="Blazej R.G."/>
            <person name="Champe M."/>
            <person name="Pfeiffer B.D."/>
            <person name="Wan K.H."/>
            <person name="Doyle C."/>
            <person name="Baxter E.G."/>
            <person name="Helt G."/>
            <person name="Nelson C.R."/>
            <person name="Miklos G.L.G."/>
            <person name="Abril J.F."/>
            <person name="Agbayani A."/>
            <person name="An H.-J."/>
            <person name="Andrews-Pfannkoch C."/>
            <person name="Baldwin D."/>
            <person name="Ballew R.M."/>
            <person name="Basu A."/>
            <person name="Baxendale J."/>
            <person name="Bayraktaroglu L."/>
            <person name="Beasley E.M."/>
            <person name="Beeson K.Y."/>
            <person name="Benos P.V."/>
            <person name="Berman B.P."/>
            <person name="Bhandari D."/>
            <person name="Bolshakov S."/>
            <person name="Borkova D."/>
            <person name="Botchan M.R."/>
            <person name="Bouck J."/>
            <person name="Brokstein P."/>
            <person name="Brottier P."/>
            <person name="Burtis K.C."/>
            <person name="Busam D.A."/>
            <person name="Butler H."/>
            <person name="Cadieu E."/>
            <person name="Center A."/>
            <person name="Chandra I."/>
            <person name="Cherry J.M."/>
            <person name="Cawley S."/>
            <person name="Dahlke C."/>
            <person name="Davenport L.B."/>
            <person name="Davies P."/>
            <person name="de Pablos B."/>
            <person name="Delcher A."/>
            <person name="Deng Z."/>
            <person name="Mays A.D."/>
            <person name="Dew I."/>
            <person name="Dietz S.M."/>
            <person name="Dodson K."/>
            <person name="Doup L.E."/>
            <person name="Downes M."/>
            <person name="Dugan-Rocha S."/>
            <person name="Dunkov B.C."/>
            <person name="Dunn P."/>
            <person name="Durbin K.J."/>
            <person name="Evangelista C.C."/>
            <person name="Ferraz C."/>
            <person name="Ferriera S."/>
            <person name="Fleischmann W."/>
            <person name="Fosler C."/>
            <person name="Gabrielian A.E."/>
            <person name="Garg N.S."/>
            <person name="Gelbart W.M."/>
            <person name="Glasser K."/>
            <person name="Glodek A."/>
            <person name="Gong F."/>
            <person name="Gorrell J.H."/>
            <person name="Gu Z."/>
            <person name="Guan P."/>
            <person name="Harris M."/>
            <person name="Harris N.L."/>
            <person name="Harvey D.A."/>
            <person name="Heiman T.J."/>
            <person name="Hernandez J.R."/>
            <person name="Houck J."/>
            <person name="Hostin D."/>
            <person name="Houston K.A."/>
            <person name="Howland T.J."/>
            <person name="Wei M.-H."/>
            <person name="Ibegwam C."/>
            <person name="Jalali M."/>
            <person name="Kalush F."/>
            <person name="Karpen G.H."/>
            <person name="Ke Z."/>
            <person name="Kennison J.A."/>
            <person name="Ketchum K.A."/>
            <person name="Kimmel B.E."/>
            <person name="Kodira C.D."/>
            <person name="Kraft C.L."/>
            <person name="Kravitz S."/>
            <person name="Kulp D."/>
            <person name="Lai Z."/>
            <person name="Lasko P."/>
            <person name="Lei Y."/>
            <person name="Levitsky A.A."/>
            <person name="Li J.H."/>
            <person name="Li Z."/>
            <person name="Liang Y."/>
            <person name="Lin X."/>
            <person name="Liu X."/>
            <person name="Mattei B."/>
            <person name="McIntosh T.C."/>
            <person name="McLeod M.P."/>
            <person name="McPherson D."/>
            <person name="Merkulov G."/>
            <person name="Milshina N.V."/>
            <person name="Mobarry C."/>
            <person name="Morris J."/>
            <person name="Moshrefi A."/>
            <person name="Mount S.M."/>
            <person name="Moy M."/>
            <person name="Murphy B."/>
            <person name="Murphy L."/>
            <person name="Muzny D.M."/>
            <person name="Nelson D.L."/>
            <person name="Nelson D.R."/>
            <person name="Nelson K.A."/>
            <person name="Nixon K."/>
            <person name="Nusskern D.R."/>
            <person name="Pacleb J.M."/>
            <person name="Palazzolo M."/>
            <person name="Pittman G.S."/>
            <person name="Pan S."/>
            <person name="Pollard J."/>
            <person name="Puri V."/>
            <person name="Reese M.G."/>
            <person name="Reinert K."/>
            <person name="Remington K."/>
            <person name="Saunders R.D.C."/>
            <person name="Scheeler F."/>
            <person name="Shen H."/>
            <person name="Shue B.C."/>
            <person name="Siden-Kiamos I."/>
            <person name="Simpson M."/>
            <person name="Skupski M.P."/>
            <person name="Smith T.J."/>
            <person name="Spier E."/>
            <person name="Spradling A.C."/>
            <person name="Stapleton M."/>
            <person name="Strong R."/>
            <person name="Sun E."/>
            <person name="Svirskas R."/>
            <person name="Tector C."/>
            <person name="Turner R."/>
            <person name="Venter E."/>
            <person name="Wang A.H."/>
            <person name="Wang X."/>
            <person name="Wang Z.-Y."/>
            <person name="Wassarman D.A."/>
            <person name="Weinstock G.M."/>
            <person name="Weissenbach J."/>
            <person name="Williams S.M."/>
            <person name="Woodage T."/>
            <person name="Worley K.C."/>
            <person name="Wu D."/>
            <person name="Yang S."/>
            <person name="Yao Q.A."/>
            <person name="Ye J."/>
            <person name="Yeh R.-F."/>
            <person name="Zaveri J.S."/>
            <person name="Zhan M."/>
            <person name="Zhang G."/>
            <person name="Zhao Q."/>
            <person name="Zheng L."/>
            <person name="Zheng X.H."/>
            <person name="Zhong F.N."/>
            <person name="Zhong W."/>
            <person name="Zhou X."/>
            <person name="Zhu S.C."/>
            <person name="Zhu X."/>
            <person name="Smith H.O."/>
            <person name="Gibbs R.A."/>
            <person name="Myers E.W."/>
            <person name="Rubin G.M."/>
            <person name="Venter J.C."/>
        </authorList>
    </citation>
    <scope>NUCLEOTIDE SEQUENCE [LARGE SCALE GENOMIC DNA]</scope>
    <source>
        <strain>Berkeley</strain>
    </source>
</reference>
<reference key="3">
    <citation type="journal article" date="2002" name="Genome Biol.">
        <title>Annotation of the Drosophila melanogaster euchromatic genome: a systematic review.</title>
        <authorList>
            <person name="Misra S."/>
            <person name="Crosby M.A."/>
            <person name="Mungall C.J."/>
            <person name="Matthews B.B."/>
            <person name="Campbell K.S."/>
            <person name="Hradecky P."/>
            <person name="Huang Y."/>
            <person name="Kaminker J.S."/>
            <person name="Millburn G.H."/>
            <person name="Prochnik S.E."/>
            <person name="Smith C.D."/>
            <person name="Tupy J.L."/>
            <person name="Whitfield E.J."/>
            <person name="Bayraktaroglu L."/>
            <person name="Berman B.P."/>
            <person name="Bettencourt B.R."/>
            <person name="Celniker S.E."/>
            <person name="de Grey A.D.N.J."/>
            <person name="Drysdale R.A."/>
            <person name="Harris N.L."/>
            <person name="Richter J."/>
            <person name="Russo S."/>
            <person name="Schroeder A.J."/>
            <person name="Shu S.Q."/>
            <person name="Stapleton M."/>
            <person name="Yamada C."/>
            <person name="Ashburner M."/>
            <person name="Gelbart W.M."/>
            <person name="Rubin G.M."/>
            <person name="Lewis S.E."/>
        </authorList>
    </citation>
    <scope>GENOME REANNOTATION</scope>
    <source>
        <strain>Berkeley</strain>
    </source>
</reference>
<reference key="4">
    <citation type="journal article" date="2002" name="Genome Biol.">
        <title>A Drosophila full-length cDNA resource.</title>
        <authorList>
            <person name="Stapleton M."/>
            <person name="Carlson J.W."/>
            <person name="Brokstein P."/>
            <person name="Yu C."/>
            <person name="Champe M."/>
            <person name="George R.A."/>
            <person name="Guarin H."/>
            <person name="Kronmiller B."/>
            <person name="Pacleb J.M."/>
            <person name="Park S."/>
            <person name="Wan K.H."/>
            <person name="Rubin G.M."/>
            <person name="Celniker S.E."/>
        </authorList>
    </citation>
    <scope>NUCLEOTIDE SEQUENCE [LARGE SCALE MRNA] OF 213-757 (ISOFORM PS2M8)</scope>
    <source>
        <strain>Berkeley</strain>
        <tissue>Embryo</tissue>
    </source>
</reference>
<reference key="5">
    <citation type="journal article" date="1989" name="Cell">
        <title>Developmentally regulated alternative splicing of Drosophila integrin PS2 alpha transcripts.</title>
        <authorList>
            <person name="Brown N.H."/>
            <person name="King D.L."/>
            <person name="Wilcox M."/>
            <person name="Kafatos F.C."/>
        </authorList>
    </citation>
    <scope>ALTERNATIVE SPLICING</scope>
    <scope>DEVELOPMENTAL STAGE</scope>
</reference>
<reference key="6">
    <citation type="journal article" date="1993" name="Mech. Dev.">
        <title>Cloning and characterization of alpha PS1, a novel Drosophila melanogaster integrin.</title>
        <authorList>
            <person name="Wehrli M."/>
            <person name="Diantonio A."/>
            <person name="Fearnley I.M."/>
            <person name="Smith R.J."/>
            <person name="Wilcox M."/>
        </authorList>
    </citation>
    <scope>TISSUE SPECIFICITY</scope>
    <scope>DEVELOPMENTAL STAGE</scope>
    <source>
        <strain>Oregon-R</strain>
        <tissue>Embryo</tissue>
        <tissue>Larva</tissue>
    </source>
</reference>
<reference key="7">
    <citation type="journal article" date="1994" name="Development">
        <title>Tiggrin, a novel Drosophila extracellular matrix protein that functions as a ligand for Drosophila alpha PS2 beta PS integrins.</title>
        <authorList>
            <person name="Fogerty F.J."/>
            <person name="Fessler L.I."/>
            <person name="Bunch T.A."/>
            <person name="Yaron Y."/>
            <person name="Parker C.G."/>
            <person name="Nelson R.E."/>
            <person name="Brower D.L."/>
            <person name="Gullberg D."/>
            <person name="Fessler J.H."/>
        </authorList>
    </citation>
    <scope>FUNCTION</scope>
</reference>
<reference key="8">
    <citation type="journal article" date="1994" name="Proc. Natl. Acad. Sci. U.S.A.">
        <title>Drosophila PS1 integrin is a laminin receptor and differs in ligand specificity from PS2.</title>
        <authorList>
            <person name="Gotwals P.J."/>
            <person name="Fessler L.I."/>
            <person name="Wehrli M."/>
            <person name="Hynes R.O."/>
        </authorList>
    </citation>
    <scope>FUNCTION</scope>
</reference>
<reference key="9">
    <citation type="journal article" date="1998" name="J. Biol. Chem.">
        <title>Splice variants of the Drosophila PS2 integrins differentially interact with RGD-containing fragments of the extracellular proteins tiggrin, ten-m, and D-laminin 2.</title>
        <authorList>
            <person name="Graner M.W."/>
            <person name="Bunch T.A."/>
            <person name="Baumgartner S."/>
            <person name="Kerschen A."/>
            <person name="Brower D.L."/>
        </authorList>
    </citation>
    <scope>FUNCTION</scope>
</reference>
<reference key="10">
    <citation type="journal article" date="2000" name="Mol. Gen. Genet.">
        <title>Genetic analysis of olfC demonstrates a role for the position-specific integrins in the olfactory system of Drosophila melanogaster.</title>
        <authorList>
            <person name="Ayyub C."/>
            <person name="Rodrigues V."/>
            <person name="Hasan G."/>
            <person name="Siddiqi O."/>
        </authorList>
    </citation>
    <scope>FUNCTION</scope>
</reference>
<reference key="11">
    <citation type="journal article" date="2004" name="Development">
        <title>Morphogenesis in the absence of integrins: mutation of both Drosophila beta subunits prevents midgut migration.</title>
        <authorList>
            <person name="Devenport D."/>
            <person name="Brown N.H."/>
        </authorList>
    </citation>
    <scope>TISSUE SPECIFICITY</scope>
</reference>
<reference key="12">
    <citation type="journal article" date="2008" name="Dev. Dyn.">
        <title>Integrin alpha chains exhibit distinct temporal and spatial localization patterns in epithelial cells of the Drosophila ovary.</title>
        <authorList>
            <person name="Dinkins M.B."/>
            <person name="Fratto V.M."/>
            <person name="Lemosy E.K."/>
        </authorList>
    </citation>
    <scope>SUBCELLULAR LOCATION</scope>
    <scope>TISSUE SPECIFICITY</scope>
</reference>
<organism>
    <name type="scientific">Drosophila melanogaster</name>
    <name type="common">Fruit fly</name>
    <dbReference type="NCBI Taxonomy" id="7227"/>
    <lineage>
        <taxon>Eukaryota</taxon>
        <taxon>Metazoa</taxon>
        <taxon>Ecdysozoa</taxon>
        <taxon>Arthropoda</taxon>
        <taxon>Hexapoda</taxon>
        <taxon>Insecta</taxon>
        <taxon>Pterygota</taxon>
        <taxon>Neoptera</taxon>
        <taxon>Endopterygota</taxon>
        <taxon>Diptera</taxon>
        <taxon>Brachycera</taxon>
        <taxon>Muscomorpha</taxon>
        <taxon>Ephydroidea</taxon>
        <taxon>Drosophilidae</taxon>
        <taxon>Drosophila</taxon>
        <taxon>Sophophora</taxon>
    </lineage>
</organism>
<sequence>MSGDSIHRRRMALHCPITSLILLLIAMSAHGYNIDLPSYVRFRQSSNSMFGFSIAMHKGRSGFYGNQNNVSLIVGAPKFDTSRYQQGVTEAGGVFKCSLNDDDCKLVPFDSKGNNRNVDKEVVDRKSYQWLGATVATGRDSDLVVACAPRYVFHTMTPSRAFRIDPVGTCFTSHNFEEFYEVSPCRTNNWGYHRQGSCQAGFSAAINGNGSRLFIGAPGSWYWQGQTYSIPPDAKFPFKPPLYQPFGTGGMASSHDVTRPENQVFSTSESASVNDDSYLGYSMVTGDFDGDRSEDVAIGMPRGGNLVGRIVVNRWNMANIFNITGRQIGEYFGYSLATSDVDGDGLDDLLIGAPMYTDPDNVEGKYDVGRVYILLQGGPTEEKRWTTEHIRDGYHSKGRFGLALTTLGDVNGDGYGDFAVGAPYDGPEGRGVVYIFHGSPMGPLAKPSQIIKSEQLVEGAPYPRTFGFALSGGLDMDGNTYPDLAVGAYSSDQVFIFKSRPVAAVNAETSFASNSKLISLDDRSCQLVRDHKKVPCMLLTTCWSYTGRYLPEQLDFDVSWLLDAKKLLNPRMFFLRDEGKNIRNQTIRLNYGQKYCLNETVYLLDKVQDKLTPLEVEARYNLRSSRPLDPMVRHRRSILEPVIDQNREIVLRDAINIQKNCGPDNICEPDLKLKVSTVDKYLFGSPEPLVIEVFISNTNEDAFEAAFYMVTPPDLQFRKLQQLGEKKDTPITCSPPTPENNHTLKCDIGNPLESGKIAHFKISLVPEEKYGSSSSYDFYWEANSTNLEKPGSEYDNKIRQSVGIWVDTDLDIKGTSLPDYQLYKADDYKELENATKEDDIGPQVVHIYEIRNNRPSIIEEAEVFIHLPYETIVGDPLMYLLNQPETGGKIQCDDVAFNEYNLLLDEKLVKKSYLQAQGAIWNSAQVSGQSSSSSSSGGASVHIEKARGEGFVRGVLVSNSTDAGDKLSPKQVEQRRQEDTLEALGDASFVHRDRASQAVQEPQVNQTSFTTYSTSSSSSGSGAPSAQLRGHSTQGHIQMAGPVQHTSSSSSSNYRSWPAQQQQQHQQLLLAGSGGSGLGSPVTFNDKSQFGGRNNNFHTGTLDLGTLNRGNVDNELYRSQGQYQNPSQSLGQSQGQFQANANQGHYQGQNQAQFQARNPGFQGQTSYQGQTQYSGQPGGYQTHHVTYSSGSKPYYGRENEDFYDEDNLQQATPGHWSSSSSSSSSSGTRRLRRSNDKDGATEKPLQIDLNSPCQSARCKSIRCVVTNLGTEDGDAAFVAIRARMVAKTMEKLASNVPLNVSTLAVANVTLLPFIGAPKDAIVKTHEIFYKAEPEPLQVPDVVPLWVVVLAACAGALIFLLLVWLLYKCGFFNRNRPTDHSQERQPLRNGYHGDEHL</sequence>
<accession>P12080</accession>
<accession>E1JJN2</accession>
<accession>Q8IR07</accession>
<accession>Q8MSG3</accession>
<accession>Q9VXB6</accession>
<name>ITA2_DROME</name>
<evidence type="ECO:0000255" key="1"/>
<evidence type="ECO:0000255" key="2">
    <source>
        <dbReference type="PROSITE-ProRule" id="PRU00803"/>
    </source>
</evidence>
<evidence type="ECO:0000256" key="3">
    <source>
        <dbReference type="SAM" id="MobiDB-lite"/>
    </source>
</evidence>
<evidence type="ECO:0000269" key="4">
    <source>
    </source>
</evidence>
<evidence type="ECO:0000269" key="5">
    <source>
    </source>
</evidence>
<evidence type="ECO:0000269" key="6">
    <source>
    </source>
</evidence>
<evidence type="ECO:0000269" key="7">
    <source>
    </source>
</evidence>
<evidence type="ECO:0000269" key="8">
    <source>
    </source>
</evidence>
<evidence type="ECO:0000269" key="9">
    <source>
    </source>
</evidence>
<evidence type="ECO:0000269" key="10">
    <source>
    </source>
</evidence>
<evidence type="ECO:0000269" key="11">
    <source>
    </source>
</evidence>
<evidence type="ECO:0000269" key="12">
    <source>
    </source>
</evidence>
<evidence type="ECO:0000303" key="13">
    <source>
    </source>
</evidence>
<evidence type="ECO:0000305" key="14"/>
<protein>
    <recommendedName>
        <fullName>Integrin alpha-PS2</fullName>
    </recommendedName>
    <alternativeName>
        <fullName>Position-specific antigen subunit alpha-2</fullName>
    </alternativeName>
    <alternativeName>
        <fullName>Protein inflated</fullName>
    </alternativeName>
    <component>
        <recommendedName>
            <fullName>Integrin alpha-PS2 heavy chain</fullName>
        </recommendedName>
    </component>
    <component>
        <recommendedName>
            <fullName>Integrin alpha-PS2 light chain</fullName>
        </recommendedName>
    </component>
</protein>
<dbReference type="EMBL" id="M19059">
    <property type="protein sequence ID" value="AAC12788.1"/>
    <property type="molecule type" value="mRNA"/>
</dbReference>
<dbReference type="EMBL" id="AE014298">
    <property type="protein sequence ID" value="AAF48661.1"/>
    <property type="molecule type" value="Genomic_DNA"/>
</dbReference>
<dbReference type="EMBL" id="AE014298">
    <property type="protein sequence ID" value="AAN09423.2"/>
    <property type="molecule type" value="Genomic_DNA"/>
</dbReference>
<dbReference type="EMBL" id="AE014298">
    <property type="protein sequence ID" value="ACZ95312.1"/>
    <property type="molecule type" value="Genomic_DNA"/>
</dbReference>
<dbReference type="EMBL" id="AE014298">
    <property type="protein sequence ID" value="ACZ95313.1"/>
    <property type="molecule type" value="Genomic_DNA"/>
</dbReference>
<dbReference type="EMBL" id="AY118840">
    <property type="protein sequence ID" value="AAM50700.1"/>
    <property type="status" value="ALT_SEQ"/>
    <property type="molecule type" value="mRNA"/>
</dbReference>
<dbReference type="PIR" id="A29637">
    <property type="entry name" value="A29637"/>
</dbReference>
<dbReference type="RefSeq" id="NP_001162777.1">
    <molecule id="P12080-1"/>
    <property type="nucleotide sequence ID" value="NM_001169306.2"/>
</dbReference>
<dbReference type="RefSeq" id="NP_001162778.1">
    <molecule id="P12080-1"/>
    <property type="nucleotide sequence ID" value="NM_001169307.1"/>
</dbReference>
<dbReference type="RefSeq" id="NP_523378.2">
    <molecule id="P12080-1"/>
    <property type="nucleotide sequence ID" value="NM_078654.2"/>
</dbReference>
<dbReference type="RefSeq" id="NP_728021.2">
    <molecule id="P12080-2"/>
    <property type="nucleotide sequence ID" value="NM_167544.2"/>
</dbReference>
<dbReference type="SMR" id="P12080"/>
<dbReference type="BioGRID" id="58994">
    <property type="interactions" value="29"/>
</dbReference>
<dbReference type="DIP" id="DIP-23111N"/>
<dbReference type="FunCoup" id="P12080">
    <property type="interactions" value="334"/>
</dbReference>
<dbReference type="IntAct" id="P12080">
    <property type="interactions" value="2"/>
</dbReference>
<dbReference type="STRING" id="7227.FBpp0290568"/>
<dbReference type="GlyCosmos" id="P12080">
    <property type="glycosylation" value="12 sites, No reported glycans"/>
</dbReference>
<dbReference type="GlyGen" id="P12080">
    <property type="glycosylation" value="17 sites, 1 O-linked glycan (3 sites)"/>
</dbReference>
<dbReference type="PaxDb" id="7227-FBpp0074131"/>
<dbReference type="EnsemblMetazoa" id="FBtr0074357">
    <molecule id="P12080-1"/>
    <property type="protein sequence ID" value="FBpp0074131"/>
    <property type="gene ID" value="FBgn0001250"/>
</dbReference>
<dbReference type="EnsemblMetazoa" id="FBtr0301352">
    <molecule id="P12080-2"/>
    <property type="protein sequence ID" value="FBpp0290566"/>
    <property type="gene ID" value="FBgn0001250"/>
</dbReference>
<dbReference type="EnsemblMetazoa" id="FBtr0301353">
    <molecule id="P12080-1"/>
    <property type="protein sequence ID" value="FBpp0290567"/>
    <property type="gene ID" value="FBgn0001250"/>
</dbReference>
<dbReference type="EnsemblMetazoa" id="FBtr0301354">
    <molecule id="P12080-1"/>
    <property type="protein sequence ID" value="FBpp0290568"/>
    <property type="gene ID" value="FBgn0001250"/>
</dbReference>
<dbReference type="GeneID" id="32661"/>
<dbReference type="KEGG" id="dme:Dmel_CG9623"/>
<dbReference type="UCSC" id="CG9623-RA">
    <property type="organism name" value="d. melanogaster"/>
</dbReference>
<dbReference type="AGR" id="FB:FBgn0001250"/>
<dbReference type="CTD" id="32661"/>
<dbReference type="FlyBase" id="FBgn0001250">
    <property type="gene designation" value="if"/>
</dbReference>
<dbReference type="VEuPathDB" id="VectorBase:FBgn0001250"/>
<dbReference type="eggNOG" id="KOG3637">
    <property type="taxonomic scope" value="Eukaryota"/>
</dbReference>
<dbReference type="GeneTree" id="ENSGT00940000169118"/>
<dbReference type="HOGENOM" id="CLU_004111_4_0_1"/>
<dbReference type="InParanoid" id="P12080"/>
<dbReference type="OMA" id="QVPCMLL"/>
<dbReference type="OrthoDB" id="5317514at2759"/>
<dbReference type="PhylomeDB" id="P12080"/>
<dbReference type="Reactome" id="R-DME-114608">
    <property type="pathway name" value="Platelet degranulation"/>
</dbReference>
<dbReference type="Reactome" id="R-DME-1236973">
    <property type="pathway name" value="Cross-presentation of particulate exogenous antigens (phagosomes)"/>
</dbReference>
<dbReference type="Reactome" id="R-DME-198933">
    <property type="pathway name" value="Immunoregulatory interactions between a Lymphoid and a non-Lymphoid cell"/>
</dbReference>
<dbReference type="Reactome" id="R-DME-202733">
    <property type="pathway name" value="Cell surface interactions at the vascular wall"/>
</dbReference>
<dbReference type="Reactome" id="R-DME-2129379">
    <property type="pathway name" value="Molecules associated with elastic fibres"/>
</dbReference>
<dbReference type="Reactome" id="R-DME-216083">
    <property type="pathway name" value="Integrin cell surface interactions"/>
</dbReference>
<dbReference type="Reactome" id="R-DME-2173789">
    <property type="pathway name" value="TGF-beta receptor signaling activates SMADs"/>
</dbReference>
<dbReference type="Reactome" id="R-DME-3000170">
    <property type="pathway name" value="Syndecan interactions"/>
</dbReference>
<dbReference type="Reactome" id="R-DME-3000178">
    <property type="pathway name" value="ECM proteoglycans"/>
</dbReference>
<dbReference type="Reactome" id="R-DME-354192">
    <property type="pathway name" value="Integrin signaling"/>
</dbReference>
<dbReference type="Reactome" id="R-DME-445355">
    <property type="pathway name" value="Smooth Muscle Contraction"/>
</dbReference>
<dbReference type="Reactome" id="R-DME-5674135">
    <property type="pathway name" value="MAP2K and MAPK activation"/>
</dbReference>
<dbReference type="Reactome" id="R-DME-6798695">
    <property type="pathway name" value="Neutrophil degranulation"/>
</dbReference>
<dbReference type="Reactome" id="R-DME-9860927">
    <property type="pathway name" value="Turbulent (oscillatory, disturbed) flow shear stress activates signaling by PIEZO1 and integrins in endothelial cells"/>
</dbReference>
<dbReference type="SignaLink" id="P12080"/>
<dbReference type="BioGRID-ORCS" id="32661">
    <property type="hits" value="0 hits in 3 CRISPR screens"/>
</dbReference>
<dbReference type="ChiTaRS" id="if">
    <property type="organism name" value="fly"/>
</dbReference>
<dbReference type="GenomeRNAi" id="32661"/>
<dbReference type="PRO" id="PR:P12080"/>
<dbReference type="Proteomes" id="UP000000803">
    <property type="component" value="Chromosome X"/>
</dbReference>
<dbReference type="Bgee" id="FBgn0001250">
    <property type="expression patterns" value="Expressed in indirect flight muscle cell (Drosophila) in body wall and 141 other cell types or tissues"/>
</dbReference>
<dbReference type="ExpressionAtlas" id="P12080">
    <property type="expression patterns" value="baseline and differential"/>
</dbReference>
<dbReference type="GO" id="GO:0016324">
    <property type="term" value="C:apical plasma membrane"/>
    <property type="evidence" value="ECO:0007669"/>
    <property type="project" value="UniProtKB-SubCell"/>
</dbReference>
<dbReference type="GO" id="GO:0009925">
    <property type="term" value="C:basal plasma membrane"/>
    <property type="evidence" value="ECO:0000314"/>
    <property type="project" value="FlyBase"/>
</dbReference>
<dbReference type="GO" id="GO:0009897">
    <property type="term" value="C:external side of plasma membrane"/>
    <property type="evidence" value="ECO:0000318"/>
    <property type="project" value="GO_Central"/>
</dbReference>
<dbReference type="GO" id="GO:0005925">
    <property type="term" value="C:focal adhesion"/>
    <property type="evidence" value="ECO:0000314"/>
    <property type="project" value="FlyBase"/>
</dbReference>
<dbReference type="GO" id="GO:0008305">
    <property type="term" value="C:integrin complex"/>
    <property type="evidence" value="ECO:0000314"/>
    <property type="project" value="FlyBase"/>
</dbReference>
<dbReference type="GO" id="GO:0016328">
    <property type="term" value="C:lateral plasma membrane"/>
    <property type="evidence" value="ECO:0007669"/>
    <property type="project" value="UniProtKB-SubCell"/>
</dbReference>
<dbReference type="GO" id="GO:0005886">
    <property type="term" value="C:plasma membrane"/>
    <property type="evidence" value="ECO:0000314"/>
    <property type="project" value="FlyBase"/>
</dbReference>
<dbReference type="GO" id="GO:0042383">
    <property type="term" value="C:sarcolemma"/>
    <property type="evidence" value="ECO:0000314"/>
    <property type="project" value="FlyBase"/>
</dbReference>
<dbReference type="GO" id="GO:0050840">
    <property type="term" value="F:extracellular matrix binding"/>
    <property type="evidence" value="ECO:0000314"/>
    <property type="project" value="FlyBase"/>
</dbReference>
<dbReference type="GO" id="GO:0005178">
    <property type="term" value="F:integrin binding"/>
    <property type="evidence" value="ECO:0000318"/>
    <property type="project" value="GO_Central"/>
</dbReference>
<dbReference type="GO" id="GO:0046982">
    <property type="term" value="F:protein heterodimerization activity"/>
    <property type="evidence" value="ECO:0000353"/>
    <property type="project" value="FlyBase"/>
</dbReference>
<dbReference type="GO" id="GO:0007475">
    <property type="term" value="P:apposition of dorsal and ventral imaginal disc-derived wing surfaces"/>
    <property type="evidence" value="ECO:0000303"/>
    <property type="project" value="FlyBase"/>
</dbReference>
<dbReference type="GO" id="GO:0007411">
    <property type="term" value="P:axon guidance"/>
    <property type="evidence" value="ECO:0000315"/>
    <property type="project" value="FlyBase"/>
</dbReference>
<dbReference type="GO" id="GO:0007414">
    <property type="term" value="P:axonal defasciculation"/>
    <property type="evidence" value="ECO:0000315"/>
    <property type="project" value="FlyBase"/>
</dbReference>
<dbReference type="GO" id="GO:0007298">
    <property type="term" value="P:border follicle cell migration"/>
    <property type="evidence" value="ECO:0000315"/>
    <property type="project" value="FlyBase"/>
</dbReference>
<dbReference type="GO" id="GO:0033627">
    <property type="term" value="P:cell adhesion mediated by integrin"/>
    <property type="evidence" value="ECO:0000314"/>
    <property type="project" value="FlyBase"/>
</dbReference>
<dbReference type="GO" id="GO:0016477">
    <property type="term" value="P:cell migration"/>
    <property type="evidence" value="ECO:0000304"/>
    <property type="project" value="FlyBase"/>
</dbReference>
<dbReference type="GO" id="GO:0098609">
    <property type="term" value="P:cell-cell adhesion"/>
    <property type="evidence" value="ECO:0000318"/>
    <property type="project" value="GO_Central"/>
</dbReference>
<dbReference type="GO" id="GO:0007160">
    <property type="term" value="P:cell-matrix adhesion"/>
    <property type="evidence" value="ECO:0000250"/>
    <property type="project" value="FlyBase"/>
</dbReference>
<dbReference type="GO" id="GO:0021551">
    <property type="term" value="P:central nervous system morphogenesis"/>
    <property type="evidence" value="ECO:0000315"/>
    <property type="project" value="FlyBase"/>
</dbReference>
<dbReference type="GO" id="GO:0035099">
    <property type="term" value="P:hemocyte migration"/>
    <property type="evidence" value="ECO:0000315"/>
    <property type="project" value="FlyBase"/>
</dbReference>
<dbReference type="GO" id="GO:0007157">
    <property type="term" value="P:heterophilic cell-cell adhesion via plasma membrane cell adhesion molecules"/>
    <property type="evidence" value="ECO:0000304"/>
    <property type="project" value="FlyBase"/>
</dbReference>
<dbReference type="GO" id="GO:0007476">
    <property type="term" value="P:imaginal disc-derived wing morphogenesis"/>
    <property type="evidence" value="ECO:0000315"/>
    <property type="project" value="FlyBase"/>
</dbReference>
<dbReference type="GO" id="GO:0007229">
    <property type="term" value="P:integrin-mediated signaling pathway"/>
    <property type="evidence" value="ECO:0000318"/>
    <property type="project" value="GO_Central"/>
</dbReference>
<dbReference type="GO" id="GO:0035160">
    <property type="term" value="P:maintenance of epithelial integrity, open tracheal system"/>
    <property type="evidence" value="ECO:0000316"/>
    <property type="project" value="FlyBase"/>
</dbReference>
<dbReference type="GO" id="GO:0045185">
    <property type="term" value="P:maintenance of protein location"/>
    <property type="evidence" value="ECO:0000315"/>
    <property type="project" value="FlyBase"/>
</dbReference>
<dbReference type="GO" id="GO:0007494">
    <property type="term" value="P:midgut development"/>
    <property type="evidence" value="ECO:0000304"/>
    <property type="project" value="FlyBase"/>
</dbReference>
<dbReference type="GO" id="GO:0016203">
    <property type="term" value="P:muscle attachment"/>
    <property type="evidence" value="ECO:0000315"/>
    <property type="project" value="FlyBase"/>
</dbReference>
<dbReference type="GO" id="GO:0030239">
    <property type="term" value="P:myofibril assembly"/>
    <property type="evidence" value="ECO:0000315"/>
    <property type="project" value="FlyBase"/>
</dbReference>
<dbReference type="GO" id="GO:0051492">
    <property type="term" value="P:regulation of stress fiber assembly"/>
    <property type="evidence" value="ECO:0000315"/>
    <property type="project" value="FlyBase"/>
</dbReference>
<dbReference type="GO" id="GO:0007431">
    <property type="term" value="P:salivary gland development"/>
    <property type="evidence" value="ECO:0000304"/>
    <property type="project" value="FlyBase"/>
</dbReference>
<dbReference type="GO" id="GO:0007435">
    <property type="term" value="P:salivary gland morphogenesis"/>
    <property type="evidence" value="ECO:0000316"/>
    <property type="project" value="FlyBase"/>
</dbReference>
<dbReference type="GO" id="GO:0045214">
    <property type="term" value="P:sarcomere organization"/>
    <property type="evidence" value="ECO:0000315"/>
    <property type="project" value="FlyBase"/>
</dbReference>
<dbReference type="GO" id="GO:0007608">
    <property type="term" value="P:sensory perception of smell"/>
    <property type="evidence" value="ECO:0000316"/>
    <property type="project" value="FlyBase"/>
</dbReference>
<dbReference type="GO" id="GO:0034446">
    <property type="term" value="P:substrate adhesion-dependent cell spreading"/>
    <property type="evidence" value="ECO:0000314"/>
    <property type="project" value="FlyBase"/>
</dbReference>
<dbReference type="GO" id="GO:0007419">
    <property type="term" value="P:ventral cord development"/>
    <property type="evidence" value="ECO:0000315"/>
    <property type="project" value="FlyBase"/>
</dbReference>
<dbReference type="FunFam" id="2.130.10.130:FF:000023">
    <property type="entry name" value="integrin alpha-PS2 isoform X1"/>
    <property type="match status" value="1"/>
</dbReference>
<dbReference type="FunFam" id="1.20.5.930:FF:000009">
    <property type="entry name" value="integrin alpha-PS2 isoform X2"/>
    <property type="match status" value="1"/>
</dbReference>
<dbReference type="Gene3D" id="1.20.5.930">
    <property type="entry name" value="Bicelle-embedded integrin alpha(iib) transmembrane segment"/>
    <property type="match status" value="1"/>
</dbReference>
<dbReference type="Gene3D" id="2.130.10.130">
    <property type="entry name" value="Integrin alpha, N-terminal"/>
    <property type="match status" value="1"/>
</dbReference>
<dbReference type="Gene3D" id="2.60.40.1460">
    <property type="entry name" value="Integrin domains. Chain A, domain 2"/>
    <property type="match status" value="1"/>
</dbReference>
<dbReference type="Gene3D" id="2.60.40.1510">
    <property type="entry name" value="ntegrin, alpha v. Chain A, domain 3"/>
    <property type="match status" value="1"/>
</dbReference>
<dbReference type="Gene3D" id="2.60.40.1530">
    <property type="entry name" value="ntegrin, alpha v. Chain A, domain 4"/>
    <property type="match status" value="2"/>
</dbReference>
<dbReference type="InterPro" id="IPR013517">
    <property type="entry name" value="FG-GAP"/>
</dbReference>
<dbReference type="InterPro" id="IPR013519">
    <property type="entry name" value="Int_alpha_beta-p"/>
</dbReference>
<dbReference type="InterPro" id="IPR000413">
    <property type="entry name" value="Integrin_alpha"/>
</dbReference>
<dbReference type="InterPro" id="IPR018184">
    <property type="entry name" value="Integrin_alpha_C_CS"/>
</dbReference>
<dbReference type="InterPro" id="IPR013649">
    <property type="entry name" value="Integrin_alpha_Ig-like_1"/>
</dbReference>
<dbReference type="InterPro" id="IPR048285">
    <property type="entry name" value="Integrin_alpha_Ig-like_2"/>
</dbReference>
<dbReference type="InterPro" id="IPR048286">
    <property type="entry name" value="Integrin_alpha_Ig-like_3"/>
</dbReference>
<dbReference type="InterPro" id="IPR028994">
    <property type="entry name" value="Integrin_alpha_N"/>
</dbReference>
<dbReference type="InterPro" id="IPR032695">
    <property type="entry name" value="Integrin_dom_sf"/>
</dbReference>
<dbReference type="PANTHER" id="PTHR23220">
    <property type="entry name" value="INTEGRIN ALPHA"/>
    <property type="match status" value="1"/>
</dbReference>
<dbReference type="PANTHER" id="PTHR23220:SF133">
    <property type="entry name" value="INTEGRIN ALPHA-PS2"/>
    <property type="match status" value="1"/>
</dbReference>
<dbReference type="Pfam" id="PF01839">
    <property type="entry name" value="FG-GAP"/>
    <property type="match status" value="2"/>
</dbReference>
<dbReference type="Pfam" id="PF08441">
    <property type="entry name" value="Integrin_A_Ig_1"/>
    <property type="match status" value="1"/>
</dbReference>
<dbReference type="Pfam" id="PF20805">
    <property type="entry name" value="Integrin_A_Ig_2"/>
    <property type="match status" value="1"/>
</dbReference>
<dbReference type="Pfam" id="PF20806">
    <property type="entry name" value="Integrin_A_Ig_3"/>
    <property type="match status" value="1"/>
</dbReference>
<dbReference type="Pfam" id="PF00357">
    <property type="entry name" value="Integrin_alpha"/>
    <property type="match status" value="1"/>
</dbReference>
<dbReference type="PRINTS" id="PR01185">
    <property type="entry name" value="INTEGRINA"/>
</dbReference>
<dbReference type="SMART" id="SM00191">
    <property type="entry name" value="Int_alpha"/>
    <property type="match status" value="5"/>
</dbReference>
<dbReference type="SUPFAM" id="SSF69318">
    <property type="entry name" value="Integrin alpha N-terminal domain"/>
    <property type="match status" value="1"/>
</dbReference>
<dbReference type="SUPFAM" id="SSF69179">
    <property type="entry name" value="Integrin domains"/>
    <property type="match status" value="3"/>
</dbReference>
<dbReference type="PROSITE" id="PS51470">
    <property type="entry name" value="FG_GAP"/>
    <property type="match status" value="7"/>
</dbReference>
<dbReference type="PROSITE" id="PS00242">
    <property type="entry name" value="INTEGRIN_ALPHA"/>
    <property type="match status" value="1"/>
</dbReference>